<evidence type="ECO:0000255" key="1">
    <source>
        <dbReference type="HAMAP-Rule" id="MF_00175"/>
    </source>
</evidence>
<evidence type="ECO:0000255" key="2">
    <source>
        <dbReference type="PROSITE-ProRule" id="PRU01250"/>
    </source>
</evidence>
<evidence type="ECO:0000256" key="3">
    <source>
        <dbReference type="SAM" id="MobiDB-lite"/>
    </source>
</evidence>
<dbReference type="EMBL" id="CP001078">
    <property type="protein sequence ID" value="ACD53929.1"/>
    <property type="molecule type" value="Genomic_DNA"/>
</dbReference>
<dbReference type="RefSeq" id="WP_003370346.1">
    <property type="nucleotide sequence ID" value="NC_010723.1"/>
</dbReference>
<dbReference type="SMR" id="B2UX12"/>
<dbReference type="KEGG" id="cbt:CLH_2617"/>
<dbReference type="HOGENOM" id="CLU_014218_8_2_9"/>
<dbReference type="GO" id="GO:0009376">
    <property type="term" value="C:HslUV protease complex"/>
    <property type="evidence" value="ECO:0007669"/>
    <property type="project" value="TreeGrafter"/>
</dbReference>
<dbReference type="GO" id="GO:0005524">
    <property type="term" value="F:ATP binding"/>
    <property type="evidence" value="ECO:0007669"/>
    <property type="project" value="UniProtKB-UniRule"/>
</dbReference>
<dbReference type="GO" id="GO:0016887">
    <property type="term" value="F:ATP hydrolysis activity"/>
    <property type="evidence" value="ECO:0007669"/>
    <property type="project" value="InterPro"/>
</dbReference>
<dbReference type="GO" id="GO:0140662">
    <property type="term" value="F:ATP-dependent protein folding chaperone"/>
    <property type="evidence" value="ECO:0007669"/>
    <property type="project" value="InterPro"/>
</dbReference>
<dbReference type="GO" id="GO:0046983">
    <property type="term" value="F:protein dimerization activity"/>
    <property type="evidence" value="ECO:0007669"/>
    <property type="project" value="InterPro"/>
</dbReference>
<dbReference type="GO" id="GO:0051082">
    <property type="term" value="F:unfolded protein binding"/>
    <property type="evidence" value="ECO:0007669"/>
    <property type="project" value="UniProtKB-UniRule"/>
</dbReference>
<dbReference type="GO" id="GO:0008270">
    <property type="term" value="F:zinc ion binding"/>
    <property type="evidence" value="ECO:0007669"/>
    <property type="project" value="InterPro"/>
</dbReference>
<dbReference type="GO" id="GO:0051301">
    <property type="term" value="P:cell division"/>
    <property type="evidence" value="ECO:0007669"/>
    <property type="project" value="TreeGrafter"/>
</dbReference>
<dbReference type="GO" id="GO:0051603">
    <property type="term" value="P:proteolysis involved in protein catabolic process"/>
    <property type="evidence" value="ECO:0007669"/>
    <property type="project" value="TreeGrafter"/>
</dbReference>
<dbReference type="CDD" id="cd19497">
    <property type="entry name" value="RecA-like_ClpX"/>
    <property type="match status" value="1"/>
</dbReference>
<dbReference type="FunFam" id="1.10.8.60:FF:000002">
    <property type="entry name" value="ATP-dependent Clp protease ATP-binding subunit ClpX"/>
    <property type="match status" value="1"/>
</dbReference>
<dbReference type="FunFam" id="3.40.50.300:FF:000005">
    <property type="entry name" value="ATP-dependent Clp protease ATP-binding subunit ClpX"/>
    <property type="match status" value="1"/>
</dbReference>
<dbReference type="Gene3D" id="1.10.8.60">
    <property type="match status" value="1"/>
</dbReference>
<dbReference type="Gene3D" id="6.20.220.10">
    <property type="entry name" value="ClpX chaperone, C4-type zinc finger domain"/>
    <property type="match status" value="1"/>
</dbReference>
<dbReference type="Gene3D" id="3.40.50.300">
    <property type="entry name" value="P-loop containing nucleotide triphosphate hydrolases"/>
    <property type="match status" value="1"/>
</dbReference>
<dbReference type="HAMAP" id="MF_00175">
    <property type="entry name" value="ClpX"/>
    <property type="match status" value="1"/>
</dbReference>
<dbReference type="InterPro" id="IPR003593">
    <property type="entry name" value="AAA+_ATPase"/>
</dbReference>
<dbReference type="InterPro" id="IPR050052">
    <property type="entry name" value="ATP-dep_Clp_protease_ClpX"/>
</dbReference>
<dbReference type="InterPro" id="IPR003959">
    <property type="entry name" value="ATPase_AAA_core"/>
</dbReference>
<dbReference type="InterPro" id="IPR019489">
    <property type="entry name" value="Clp_ATPase_C"/>
</dbReference>
<dbReference type="InterPro" id="IPR004487">
    <property type="entry name" value="Clp_protease_ATP-bd_su_ClpX"/>
</dbReference>
<dbReference type="InterPro" id="IPR046425">
    <property type="entry name" value="ClpX_bact"/>
</dbReference>
<dbReference type="InterPro" id="IPR027417">
    <property type="entry name" value="P-loop_NTPase"/>
</dbReference>
<dbReference type="InterPro" id="IPR010603">
    <property type="entry name" value="Znf_CppX_C4"/>
</dbReference>
<dbReference type="InterPro" id="IPR038366">
    <property type="entry name" value="Znf_CppX_C4_sf"/>
</dbReference>
<dbReference type="NCBIfam" id="TIGR00382">
    <property type="entry name" value="clpX"/>
    <property type="match status" value="1"/>
</dbReference>
<dbReference type="NCBIfam" id="NF003745">
    <property type="entry name" value="PRK05342.1"/>
    <property type="match status" value="1"/>
</dbReference>
<dbReference type="PANTHER" id="PTHR48102:SF7">
    <property type="entry name" value="ATP-DEPENDENT CLP PROTEASE ATP-BINDING SUBUNIT CLPX-LIKE, MITOCHONDRIAL"/>
    <property type="match status" value="1"/>
</dbReference>
<dbReference type="PANTHER" id="PTHR48102">
    <property type="entry name" value="ATP-DEPENDENT CLP PROTEASE ATP-BINDING SUBUNIT CLPX-LIKE, MITOCHONDRIAL-RELATED"/>
    <property type="match status" value="1"/>
</dbReference>
<dbReference type="Pfam" id="PF07724">
    <property type="entry name" value="AAA_2"/>
    <property type="match status" value="1"/>
</dbReference>
<dbReference type="Pfam" id="PF10431">
    <property type="entry name" value="ClpB_D2-small"/>
    <property type="match status" value="1"/>
</dbReference>
<dbReference type="Pfam" id="PF06689">
    <property type="entry name" value="zf-C4_ClpX"/>
    <property type="match status" value="1"/>
</dbReference>
<dbReference type="SMART" id="SM00382">
    <property type="entry name" value="AAA"/>
    <property type="match status" value="1"/>
</dbReference>
<dbReference type="SMART" id="SM01086">
    <property type="entry name" value="ClpB_D2-small"/>
    <property type="match status" value="1"/>
</dbReference>
<dbReference type="SMART" id="SM00994">
    <property type="entry name" value="zf-C4_ClpX"/>
    <property type="match status" value="1"/>
</dbReference>
<dbReference type="SUPFAM" id="SSF57716">
    <property type="entry name" value="Glucocorticoid receptor-like (DNA-binding domain)"/>
    <property type="match status" value="1"/>
</dbReference>
<dbReference type="SUPFAM" id="SSF52540">
    <property type="entry name" value="P-loop containing nucleoside triphosphate hydrolases"/>
    <property type="match status" value="1"/>
</dbReference>
<dbReference type="PROSITE" id="PS51902">
    <property type="entry name" value="CLPX_ZB"/>
    <property type="match status" value="1"/>
</dbReference>
<gene>
    <name evidence="1" type="primary">clpX</name>
    <name type="ordered locus">CLH_2617</name>
</gene>
<feature type="chain" id="PRO_1000097938" description="ATP-dependent Clp protease ATP-binding subunit ClpX">
    <location>
        <begin position="1"/>
        <end position="429"/>
    </location>
</feature>
<feature type="domain" description="ClpX-type ZB" evidence="2">
    <location>
        <begin position="1"/>
        <end position="53"/>
    </location>
</feature>
<feature type="region of interest" description="Disordered" evidence="3">
    <location>
        <begin position="402"/>
        <end position="429"/>
    </location>
</feature>
<feature type="compositionally biased region" description="Basic and acidic residues" evidence="3">
    <location>
        <begin position="402"/>
        <end position="413"/>
    </location>
</feature>
<feature type="binding site" evidence="2">
    <location>
        <position position="12"/>
    </location>
    <ligand>
        <name>Zn(2+)</name>
        <dbReference type="ChEBI" id="CHEBI:29105"/>
    </ligand>
</feature>
<feature type="binding site" evidence="2">
    <location>
        <position position="15"/>
    </location>
    <ligand>
        <name>Zn(2+)</name>
        <dbReference type="ChEBI" id="CHEBI:29105"/>
    </ligand>
</feature>
<feature type="binding site" evidence="2">
    <location>
        <position position="34"/>
    </location>
    <ligand>
        <name>Zn(2+)</name>
        <dbReference type="ChEBI" id="CHEBI:29105"/>
    </ligand>
</feature>
<feature type="binding site" evidence="2">
    <location>
        <position position="37"/>
    </location>
    <ligand>
        <name>Zn(2+)</name>
        <dbReference type="ChEBI" id="CHEBI:29105"/>
    </ligand>
</feature>
<feature type="binding site" evidence="1">
    <location>
        <begin position="116"/>
        <end position="123"/>
    </location>
    <ligand>
        <name>ATP</name>
        <dbReference type="ChEBI" id="CHEBI:30616"/>
    </ligand>
</feature>
<accession>B2UX12</accession>
<keyword id="KW-0067">ATP-binding</keyword>
<keyword id="KW-0143">Chaperone</keyword>
<keyword id="KW-0479">Metal-binding</keyword>
<keyword id="KW-0547">Nucleotide-binding</keyword>
<keyword id="KW-0862">Zinc</keyword>
<organism>
    <name type="scientific">Clostridium botulinum (strain Alaska E43 / Type E3)</name>
    <dbReference type="NCBI Taxonomy" id="508767"/>
    <lineage>
        <taxon>Bacteria</taxon>
        <taxon>Bacillati</taxon>
        <taxon>Bacillota</taxon>
        <taxon>Clostridia</taxon>
        <taxon>Eubacteriales</taxon>
        <taxon>Clostridiaceae</taxon>
        <taxon>Clostridium</taxon>
    </lineage>
</organism>
<sequence>MAKYDEKKQLKCSFCGKTQDQVKRLIAGPGVYICDECIDLCSEIIADEFEETVEFDTKSVPKPNEIKQYLDSYVIGQERAKKSLSVAVYNHYKRINTNKQDTDVELSKSNILLLGPTGSGKTLLAQTLAKVLNVPFAIADATTLTEAGYVGEDVENILLKLIQNADYDVERAERGIIYIDEIDKIARKSENPSITRDVSGEGVQQALLKILEGTVASVPPQGGRKHPHQEFIQINTSNILFICGGAFDGVDKIIENRTRKSSMGFGAEIQGKHEKDIGKLLKEIMPGDLLKFGLIPEFVGRLPILVTLESLDKDALINILTKPKNALVKQYKKLFELDDVELEFNNEALTSIAEEAIERKTGARGLRAIIEEMMTEIMYEIPSDEQITKVIITEECIKDKENPQVERLPEGKTRGTLASNRVKKDIESA</sequence>
<protein>
    <recommendedName>
        <fullName evidence="1">ATP-dependent Clp protease ATP-binding subunit ClpX</fullName>
    </recommendedName>
</protein>
<reference key="1">
    <citation type="submission" date="2008-05" db="EMBL/GenBank/DDBJ databases">
        <title>Complete genome sequence of Clostridium botulinum E3 str. Alaska E43.</title>
        <authorList>
            <person name="Brinkac L.M."/>
            <person name="Brown J.L."/>
            <person name="Bruce D."/>
            <person name="Detter C."/>
            <person name="Munk C."/>
            <person name="Smith L.A."/>
            <person name="Smith T.J."/>
            <person name="Sutton G."/>
            <person name="Brettin T.S."/>
        </authorList>
    </citation>
    <scope>NUCLEOTIDE SEQUENCE [LARGE SCALE GENOMIC DNA]</scope>
    <source>
        <strain>Alaska E43 / Type E3</strain>
    </source>
</reference>
<comment type="function">
    <text evidence="1">ATP-dependent specificity component of the Clp protease. It directs the protease to specific substrates. Can perform chaperone functions in the absence of ClpP.</text>
</comment>
<comment type="subunit">
    <text evidence="1">Component of the ClpX-ClpP complex. Forms a hexameric ring that, in the presence of ATP, binds to fourteen ClpP subunits assembled into a disk-like structure with a central cavity, resembling the structure of eukaryotic proteasomes.</text>
</comment>
<comment type="similarity">
    <text evidence="1">Belongs to the ClpX chaperone family.</text>
</comment>
<name>CLPX_CLOBA</name>
<proteinExistence type="inferred from homology"/>